<proteinExistence type="evidence at transcript level"/>
<name>AT18G_ARATH</name>
<keyword id="KW-0072">Autophagy</keyword>
<keyword id="KW-0472">Membrane</keyword>
<keyword id="KW-0653">Protein transport</keyword>
<keyword id="KW-1185">Reference proteome</keyword>
<keyword id="KW-0677">Repeat</keyword>
<keyword id="KW-0813">Transport</keyword>
<keyword id="KW-0926">Vacuole</keyword>
<keyword id="KW-0853">WD repeat</keyword>
<accession>Q8GUL1</accession>
<accession>Q56W94</accession>
<accession>Q9LR84</accession>
<accession>Q9ZVU0</accession>
<sequence length="959" mass="104578">MMKKGKGKNSGLLPNSFKIISSCLKTVSANATNVASSVRSAGASVAASISAAEDDKDQVTWAGFGILELGQHVTRHVLLLGYQNGFQVFDVEDASNFNELVSKRGGPVSFLQMQPLPARSGDHEGFWNSHPLLLVVAGDETNGTGLGHSFSQNGSLARDGSSDSKAGDAINYPTTVRFYSLRSHSYVYVLRFRSSVCMIRCSSRVVAVGLANQIYCVDALTLENKFSVLTYPVPQPVRQGTTRVNVGYGPMAVGPRWLAYASKSSMTMKTGRLSPQTFTSSPSLSPSSSSGGSSFMARYAMESSKQLANGLINLGDMGYKTLSKYCQDMLPDGSTSPASPNAIWKVGGVSGSDAENAGMVAVKDLVSGALVSQFKAHTSPISALCFDPSGTLLVTASVCGNNINVFQIMPSRSHNAPGDLSYEWESSHVHLFKLHRGITSAIVQDICFSQQSQWVAIISSKGTCHIFVLNSSGSDAAFQPCEGEEPTRLPASSLPWWFTQSLSSNQQSLSPPTAVALSVVSRIKYSSFGWLNTVSNATTAATGKVFVPSGAVAAVFHKSVTHDLQLNSRTNALEHILVYTPSGHVVQHELLPSVCTESPENGLRVQKTSHVQVQEDDLRVKVEPIQWWDVCRRSDWLETEERLPKSITEKQYDLETVSNHLTSHEDACLSLDMNSHFSEDKYLKSCSEKPPERSHCYLSNFEVKVTSGMLPVWQNSKISFHVMDSPRDSSSTGGEFEIEKVPAHELEIKQKKLLPVFDHFHSTKATLEDRFSMKCYHTSATGSHQVNGKICQDIINCHSKPGSIESAESSEEGSTKQMENLHDSDHMSNSIKSSLPLYPTVNGIYKEIEKNNANGWMEKPVTAKLSTLKETRITNGFTTPPILTDSVNEQMLSTGKPPMGFGFALHEEHCKAVADPKEEHLKKKLDEVTNVHHLNVNNNNTEKLQGDKMVHGMVSFVGD</sequence>
<gene>
    <name type="primary">ATG18G</name>
    <name type="ordered locus">At1g03380</name>
    <name type="ORF">F15K9.1</name>
    <name type="ORF">F21B7.1</name>
</gene>
<protein>
    <recommendedName>
        <fullName>Autophagy-related protein 18g</fullName>
        <shortName>AtATG18g</shortName>
    </recommendedName>
</protein>
<comment type="function">
    <text evidence="1">The PI(3,5)P2 regulatory complex regulates both the synthesis and turnover of phosphatidylinositol 3,5-bisphosphate (PtdIns(3,5)P2). Required for autophagy (By similarity).</text>
</comment>
<comment type="subunit">
    <text evidence="1">Component of the PI(3,5)P2 regulatory complex at least composed of ATG18, SAC/FIG4, FAB1 and VAC14.</text>
</comment>
<comment type="subcellular location">
    <subcellularLocation>
        <location evidence="1">Preautophagosomal structure membrane</location>
        <topology evidence="1">Peripheral membrane protein</topology>
    </subcellularLocation>
    <subcellularLocation>
        <location evidence="1">Vacuole membrane</location>
        <topology evidence="1">Peripheral membrane protein</topology>
    </subcellularLocation>
    <text evidence="1">Peripheral membrane protein of pre-autophagosomal structure (PAS) and vacuole.</text>
</comment>
<comment type="tissue specificity">
    <text evidence="3">Expressed in leaves.</text>
</comment>
<comment type="induction">
    <text evidence="3">By sucrose and nitrogen starvation.</text>
</comment>
<comment type="domain">
    <text evidence="1">The first protein part may form a beta-propeller domain involved in specific binding to phosphatidylinositol 3,5-bisphosphate (PIP2), leading to the association of the protein to the membrane.</text>
</comment>
<comment type="similarity">
    <text evidence="4">Belongs to the WD repeat PROPPIN family.</text>
</comment>
<comment type="sequence caution" evidence="4">
    <conflict type="erroneous gene model prediction">
        <sequence resource="EMBL-CDS" id="AAC72107"/>
    </conflict>
</comment>
<comment type="sequence caution" evidence="4">
    <conflict type="erroneous gene model prediction">
        <sequence resource="EMBL-CDS" id="AAF86508"/>
    </conflict>
</comment>
<reference key="1">
    <citation type="journal article" date="2000" name="Nature">
        <title>Sequence and analysis of chromosome 1 of the plant Arabidopsis thaliana.</title>
        <authorList>
            <person name="Theologis A."/>
            <person name="Ecker J.R."/>
            <person name="Palm C.J."/>
            <person name="Federspiel N.A."/>
            <person name="Kaul S."/>
            <person name="White O."/>
            <person name="Alonso J."/>
            <person name="Altafi H."/>
            <person name="Araujo R."/>
            <person name="Bowman C.L."/>
            <person name="Brooks S.Y."/>
            <person name="Buehler E."/>
            <person name="Chan A."/>
            <person name="Chao Q."/>
            <person name="Chen H."/>
            <person name="Cheuk R.F."/>
            <person name="Chin C.W."/>
            <person name="Chung M.K."/>
            <person name="Conn L."/>
            <person name="Conway A.B."/>
            <person name="Conway A.R."/>
            <person name="Creasy T.H."/>
            <person name="Dewar K."/>
            <person name="Dunn P."/>
            <person name="Etgu P."/>
            <person name="Feldblyum T.V."/>
            <person name="Feng J.-D."/>
            <person name="Fong B."/>
            <person name="Fujii C.Y."/>
            <person name="Gill J.E."/>
            <person name="Goldsmith A.D."/>
            <person name="Haas B."/>
            <person name="Hansen N.F."/>
            <person name="Hughes B."/>
            <person name="Huizar L."/>
            <person name="Hunter J.L."/>
            <person name="Jenkins J."/>
            <person name="Johnson-Hopson C."/>
            <person name="Khan S."/>
            <person name="Khaykin E."/>
            <person name="Kim C.J."/>
            <person name="Koo H.L."/>
            <person name="Kremenetskaia I."/>
            <person name="Kurtz D.B."/>
            <person name="Kwan A."/>
            <person name="Lam B."/>
            <person name="Langin-Hooper S."/>
            <person name="Lee A."/>
            <person name="Lee J.M."/>
            <person name="Lenz C.A."/>
            <person name="Li J.H."/>
            <person name="Li Y.-P."/>
            <person name="Lin X."/>
            <person name="Liu S.X."/>
            <person name="Liu Z.A."/>
            <person name="Luros J.S."/>
            <person name="Maiti R."/>
            <person name="Marziali A."/>
            <person name="Militscher J."/>
            <person name="Miranda M."/>
            <person name="Nguyen M."/>
            <person name="Nierman W.C."/>
            <person name="Osborne B.I."/>
            <person name="Pai G."/>
            <person name="Peterson J."/>
            <person name="Pham P.K."/>
            <person name="Rizzo M."/>
            <person name="Rooney T."/>
            <person name="Rowley D."/>
            <person name="Sakano H."/>
            <person name="Salzberg S.L."/>
            <person name="Schwartz J.R."/>
            <person name="Shinn P."/>
            <person name="Southwick A.M."/>
            <person name="Sun H."/>
            <person name="Tallon L.J."/>
            <person name="Tambunga G."/>
            <person name="Toriumi M.J."/>
            <person name="Town C.D."/>
            <person name="Utterback T."/>
            <person name="Van Aken S."/>
            <person name="Vaysberg M."/>
            <person name="Vysotskaia V.S."/>
            <person name="Walker M."/>
            <person name="Wu D."/>
            <person name="Yu G."/>
            <person name="Fraser C.M."/>
            <person name="Venter J.C."/>
            <person name="Davis R.W."/>
        </authorList>
    </citation>
    <scope>NUCLEOTIDE SEQUENCE [LARGE SCALE GENOMIC DNA]</scope>
    <source>
        <strain>cv. Columbia</strain>
    </source>
</reference>
<reference key="2">
    <citation type="journal article" date="2017" name="Plant J.">
        <title>Araport11: a complete reannotation of the Arabidopsis thaliana reference genome.</title>
        <authorList>
            <person name="Cheng C.Y."/>
            <person name="Krishnakumar V."/>
            <person name="Chan A.P."/>
            <person name="Thibaud-Nissen F."/>
            <person name="Schobel S."/>
            <person name="Town C.D."/>
        </authorList>
    </citation>
    <scope>GENOME REANNOTATION</scope>
    <source>
        <strain>cv. Columbia</strain>
    </source>
</reference>
<reference key="3">
    <citation type="journal article" date="2003" name="Science">
        <title>Empirical analysis of transcriptional activity in the Arabidopsis genome.</title>
        <authorList>
            <person name="Yamada K."/>
            <person name="Lim J."/>
            <person name="Dale J.M."/>
            <person name="Chen H."/>
            <person name="Shinn P."/>
            <person name="Palm C.J."/>
            <person name="Southwick A.M."/>
            <person name="Wu H.C."/>
            <person name="Kim C.J."/>
            <person name="Nguyen M."/>
            <person name="Pham P.K."/>
            <person name="Cheuk R.F."/>
            <person name="Karlin-Newmann G."/>
            <person name="Liu S.X."/>
            <person name="Lam B."/>
            <person name="Sakano H."/>
            <person name="Wu T."/>
            <person name="Yu G."/>
            <person name="Miranda M."/>
            <person name="Quach H.L."/>
            <person name="Tripp M."/>
            <person name="Chang C.H."/>
            <person name="Lee J.M."/>
            <person name="Toriumi M.J."/>
            <person name="Chan M.M."/>
            <person name="Tang C.C."/>
            <person name="Onodera C.S."/>
            <person name="Deng J.M."/>
            <person name="Akiyama K."/>
            <person name="Ansari Y."/>
            <person name="Arakawa T."/>
            <person name="Banh J."/>
            <person name="Banno F."/>
            <person name="Bowser L."/>
            <person name="Brooks S.Y."/>
            <person name="Carninci P."/>
            <person name="Chao Q."/>
            <person name="Choy N."/>
            <person name="Enju A."/>
            <person name="Goldsmith A.D."/>
            <person name="Gurjal M."/>
            <person name="Hansen N.F."/>
            <person name="Hayashizaki Y."/>
            <person name="Johnson-Hopson C."/>
            <person name="Hsuan V.W."/>
            <person name="Iida K."/>
            <person name="Karnes M."/>
            <person name="Khan S."/>
            <person name="Koesema E."/>
            <person name="Ishida J."/>
            <person name="Jiang P.X."/>
            <person name="Jones T."/>
            <person name="Kawai J."/>
            <person name="Kamiya A."/>
            <person name="Meyers C."/>
            <person name="Nakajima M."/>
            <person name="Narusaka M."/>
            <person name="Seki M."/>
            <person name="Sakurai T."/>
            <person name="Satou M."/>
            <person name="Tamse R."/>
            <person name="Vaysberg M."/>
            <person name="Wallender E.K."/>
            <person name="Wong C."/>
            <person name="Yamamura Y."/>
            <person name="Yuan S."/>
            <person name="Shinozaki K."/>
            <person name="Davis R.W."/>
            <person name="Theologis A."/>
            <person name="Ecker J.R."/>
        </authorList>
    </citation>
    <scope>NUCLEOTIDE SEQUENCE [LARGE SCALE MRNA]</scope>
    <source>
        <strain>cv. Columbia</strain>
    </source>
</reference>
<reference key="4">
    <citation type="submission" date="2005-03" db="EMBL/GenBank/DDBJ databases">
        <title>Large-scale analysis of RIKEN Arabidopsis full-length (RAFL) cDNAs.</title>
        <authorList>
            <person name="Totoki Y."/>
            <person name="Seki M."/>
            <person name="Ishida J."/>
            <person name="Nakajima M."/>
            <person name="Enju A."/>
            <person name="Kamiya A."/>
            <person name="Narusaka M."/>
            <person name="Shin-i T."/>
            <person name="Nakagawa M."/>
            <person name="Sakamoto N."/>
            <person name="Oishi K."/>
            <person name="Kohara Y."/>
            <person name="Kobayashi M."/>
            <person name="Toyoda A."/>
            <person name="Sakaki Y."/>
            <person name="Sakurai T."/>
            <person name="Iida K."/>
            <person name="Akiyama K."/>
            <person name="Satou M."/>
            <person name="Toyoda T."/>
            <person name="Konagaya A."/>
            <person name="Carninci P."/>
            <person name="Kawai J."/>
            <person name="Hayashizaki Y."/>
            <person name="Shinozaki K."/>
        </authorList>
    </citation>
    <scope>NUCLEOTIDE SEQUENCE [LARGE SCALE MRNA] OF 631-959</scope>
    <source>
        <strain>cv. Columbia</strain>
    </source>
</reference>
<reference key="5">
    <citation type="journal article" date="2005" name="Plant J.">
        <title>AtATG18a is required for the formation of autophagosomes during nutrient stress and senescence in Arabidopsis thaliana.</title>
        <authorList>
            <person name="Xiong Y."/>
            <person name="Contento A.L."/>
            <person name="Bassham D.C."/>
        </authorList>
    </citation>
    <scope>GENE FAMILY</scope>
    <scope>INDUCTION</scope>
    <scope>TISSUE SPECIFICITY</scope>
</reference>
<dbReference type="EMBL" id="AC002560">
    <property type="protein sequence ID" value="AAF86508.1"/>
    <property type="status" value="ALT_SEQ"/>
    <property type="molecule type" value="Genomic_DNA"/>
</dbReference>
<dbReference type="EMBL" id="AC005278">
    <property type="protein sequence ID" value="AAC72107.1"/>
    <property type="status" value="ALT_SEQ"/>
    <property type="molecule type" value="Genomic_DNA"/>
</dbReference>
<dbReference type="EMBL" id="CP002684">
    <property type="protein sequence ID" value="AEE27566.1"/>
    <property type="molecule type" value="Genomic_DNA"/>
</dbReference>
<dbReference type="EMBL" id="BT002410">
    <property type="protein sequence ID" value="AAO00770.1"/>
    <property type="molecule type" value="mRNA"/>
</dbReference>
<dbReference type="EMBL" id="AK222152">
    <property type="protein sequence ID" value="BAD95231.1"/>
    <property type="molecule type" value="mRNA"/>
</dbReference>
<dbReference type="PIR" id="F86165">
    <property type="entry name" value="F86165"/>
</dbReference>
<dbReference type="PIR" id="T00919">
    <property type="entry name" value="T00919"/>
</dbReference>
<dbReference type="RefSeq" id="NP_171837.7">
    <property type="nucleotide sequence ID" value="NM_100220.8"/>
</dbReference>
<dbReference type="SMR" id="Q8GUL1"/>
<dbReference type="BioGRID" id="23941">
    <property type="interactions" value="1"/>
</dbReference>
<dbReference type="FunCoup" id="Q8GUL1">
    <property type="interactions" value="433"/>
</dbReference>
<dbReference type="STRING" id="3702.Q8GUL1"/>
<dbReference type="iPTMnet" id="Q8GUL1"/>
<dbReference type="PaxDb" id="3702-AT1G03380.1"/>
<dbReference type="ProteomicsDB" id="246603"/>
<dbReference type="EnsemblPlants" id="AT1G03380.1">
    <property type="protein sequence ID" value="AT1G03380.1"/>
    <property type="gene ID" value="AT1G03380"/>
</dbReference>
<dbReference type="GeneID" id="838702"/>
<dbReference type="Gramene" id="AT1G03380.1">
    <property type="protein sequence ID" value="AT1G03380.1"/>
    <property type="gene ID" value="AT1G03380"/>
</dbReference>
<dbReference type="KEGG" id="ath:AT1G03380"/>
<dbReference type="Araport" id="AT1G03380"/>
<dbReference type="TAIR" id="AT1G03380">
    <property type="gene designation" value="ATG18G"/>
</dbReference>
<dbReference type="eggNOG" id="KOG2109">
    <property type="taxonomic scope" value="Eukaryota"/>
</dbReference>
<dbReference type="HOGENOM" id="CLU_003829_1_0_1"/>
<dbReference type="InParanoid" id="Q8GUL1"/>
<dbReference type="OMA" id="PSEHFKN"/>
<dbReference type="PhylomeDB" id="Q8GUL1"/>
<dbReference type="PRO" id="PR:Q8GUL1"/>
<dbReference type="Proteomes" id="UP000006548">
    <property type="component" value="Chromosome 1"/>
</dbReference>
<dbReference type="ExpressionAtlas" id="Q8GUL1">
    <property type="expression patterns" value="baseline and differential"/>
</dbReference>
<dbReference type="GO" id="GO:0034045">
    <property type="term" value="C:phagophore assembly site membrane"/>
    <property type="evidence" value="ECO:0007669"/>
    <property type="project" value="UniProtKB-SubCell"/>
</dbReference>
<dbReference type="GO" id="GO:0005774">
    <property type="term" value="C:vacuolar membrane"/>
    <property type="evidence" value="ECO:0007669"/>
    <property type="project" value="UniProtKB-SubCell"/>
</dbReference>
<dbReference type="GO" id="GO:0006914">
    <property type="term" value="P:autophagy"/>
    <property type="evidence" value="ECO:0007669"/>
    <property type="project" value="UniProtKB-KW"/>
</dbReference>
<dbReference type="GO" id="GO:0015031">
    <property type="term" value="P:protein transport"/>
    <property type="evidence" value="ECO:0007669"/>
    <property type="project" value="UniProtKB-KW"/>
</dbReference>
<dbReference type="GO" id="GO:0042594">
    <property type="term" value="P:response to starvation"/>
    <property type="evidence" value="ECO:0000270"/>
    <property type="project" value="TAIR"/>
</dbReference>
<dbReference type="Gene3D" id="2.130.10.10">
    <property type="entry name" value="YVTN repeat-like/Quinoprotein amine dehydrogenase"/>
    <property type="match status" value="1"/>
</dbReference>
<dbReference type="InterPro" id="IPR045142">
    <property type="entry name" value="BCAS3-like"/>
</dbReference>
<dbReference type="InterPro" id="IPR022175">
    <property type="entry name" value="BCAS3_dom"/>
</dbReference>
<dbReference type="InterPro" id="IPR048382">
    <property type="entry name" value="BCAS3_WD40"/>
</dbReference>
<dbReference type="InterPro" id="IPR015943">
    <property type="entry name" value="WD40/YVTN_repeat-like_dom_sf"/>
</dbReference>
<dbReference type="InterPro" id="IPR036322">
    <property type="entry name" value="WD40_repeat_dom_sf"/>
</dbReference>
<dbReference type="InterPro" id="IPR001680">
    <property type="entry name" value="WD40_rpt"/>
</dbReference>
<dbReference type="PANTHER" id="PTHR13268:SF0">
    <property type="entry name" value="BCAS3 MICROTUBULE ASSOCIATED CELL MIGRATION FACTOR"/>
    <property type="match status" value="1"/>
</dbReference>
<dbReference type="PANTHER" id="PTHR13268">
    <property type="entry name" value="BREAST CARCINOMA AMPLIFIED SEQUENCE 3"/>
    <property type="match status" value="1"/>
</dbReference>
<dbReference type="Pfam" id="PF12490">
    <property type="entry name" value="BCAS3"/>
    <property type="match status" value="1"/>
</dbReference>
<dbReference type="Pfam" id="PF21034">
    <property type="entry name" value="BCAS3_WD40"/>
    <property type="match status" value="1"/>
</dbReference>
<dbReference type="SMART" id="SM00320">
    <property type="entry name" value="WD40"/>
    <property type="match status" value="2"/>
</dbReference>
<dbReference type="SUPFAM" id="SSF50978">
    <property type="entry name" value="WD40 repeat-like"/>
    <property type="match status" value="1"/>
</dbReference>
<feature type="chain" id="PRO_0000421885" description="Autophagy-related protein 18g">
    <location>
        <begin position="1"/>
        <end position="959"/>
    </location>
</feature>
<feature type="repeat" description="WD 1">
    <location>
        <begin position="376"/>
        <end position="416"/>
    </location>
</feature>
<feature type="repeat" description="WD 2">
    <location>
        <begin position="438"/>
        <end position="479"/>
    </location>
</feature>
<feature type="region of interest" description="Disordered" evidence="2">
    <location>
        <begin position="802"/>
        <end position="832"/>
    </location>
</feature>
<evidence type="ECO:0000250" key="1"/>
<evidence type="ECO:0000256" key="2">
    <source>
        <dbReference type="SAM" id="MobiDB-lite"/>
    </source>
</evidence>
<evidence type="ECO:0000269" key="3">
    <source>
    </source>
</evidence>
<evidence type="ECO:0000305" key="4"/>
<organism>
    <name type="scientific">Arabidopsis thaliana</name>
    <name type="common">Mouse-ear cress</name>
    <dbReference type="NCBI Taxonomy" id="3702"/>
    <lineage>
        <taxon>Eukaryota</taxon>
        <taxon>Viridiplantae</taxon>
        <taxon>Streptophyta</taxon>
        <taxon>Embryophyta</taxon>
        <taxon>Tracheophyta</taxon>
        <taxon>Spermatophyta</taxon>
        <taxon>Magnoliopsida</taxon>
        <taxon>eudicotyledons</taxon>
        <taxon>Gunneridae</taxon>
        <taxon>Pentapetalae</taxon>
        <taxon>rosids</taxon>
        <taxon>malvids</taxon>
        <taxon>Brassicales</taxon>
        <taxon>Brassicaceae</taxon>
        <taxon>Camelineae</taxon>
        <taxon>Arabidopsis</taxon>
    </lineage>
</organism>